<keyword id="KW-0963">Cytoplasm</keyword>
<keyword id="KW-0238">DNA-binding</keyword>
<keyword id="KW-0597">Phosphoprotein</keyword>
<keyword id="KW-0804">Transcription</keyword>
<keyword id="KW-0805">Transcription regulation</keyword>
<keyword id="KW-0902">Two-component regulatory system</keyword>
<accession>Q8NYJ9</accession>
<organism>
    <name type="scientific">Staphylococcus aureus (strain MW2)</name>
    <dbReference type="NCBI Taxonomy" id="196620"/>
    <lineage>
        <taxon>Bacteria</taxon>
        <taxon>Bacillati</taxon>
        <taxon>Bacillota</taxon>
        <taxon>Bacilli</taxon>
        <taxon>Bacillales</taxon>
        <taxon>Staphylococcaceae</taxon>
        <taxon>Staphylococcus</taxon>
    </lineage>
</organism>
<gene>
    <name type="primary">hptR</name>
    <name type="ordered locus">MW0198</name>
</gene>
<protein>
    <recommendedName>
        <fullName>Transcriptional regulatory protein HptR</fullName>
    </recommendedName>
</protein>
<evidence type="ECO:0000250" key="1">
    <source>
        <dbReference type="UniProtKB" id="Q2G1E1"/>
    </source>
</evidence>
<evidence type="ECO:0000255" key="2">
    <source>
        <dbReference type="PROSITE-ProRule" id="PRU00169"/>
    </source>
</evidence>
<evidence type="ECO:0000255" key="3">
    <source>
        <dbReference type="PROSITE-ProRule" id="PRU00593"/>
    </source>
</evidence>
<evidence type="ECO:0000305" key="4"/>
<dbReference type="EMBL" id="BA000033">
    <property type="protein sequence ID" value="BAB94063.1"/>
    <property type="molecule type" value="Genomic_DNA"/>
</dbReference>
<dbReference type="RefSeq" id="WP_000477521.1">
    <property type="nucleotide sequence ID" value="NC_003923.1"/>
</dbReference>
<dbReference type="SMR" id="Q8NYJ9"/>
<dbReference type="KEGG" id="sam:MW0198"/>
<dbReference type="HOGENOM" id="CLU_000445_5_1_9"/>
<dbReference type="GO" id="GO:0005737">
    <property type="term" value="C:cytoplasm"/>
    <property type="evidence" value="ECO:0007669"/>
    <property type="project" value="UniProtKB-SubCell"/>
</dbReference>
<dbReference type="GO" id="GO:0003700">
    <property type="term" value="F:DNA-binding transcription factor activity"/>
    <property type="evidence" value="ECO:0007669"/>
    <property type="project" value="InterPro"/>
</dbReference>
<dbReference type="GO" id="GO:0043565">
    <property type="term" value="F:sequence-specific DNA binding"/>
    <property type="evidence" value="ECO:0007669"/>
    <property type="project" value="InterPro"/>
</dbReference>
<dbReference type="GO" id="GO:0000160">
    <property type="term" value="P:phosphorelay signal transduction system"/>
    <property type="evidence" value="ECO:0007669"/>
    <property type="project" value="UniProtKB-KW"/>
</dbReference>
<dbReference type="CDD" id="cd17536">
    <property type="entry name" value="REC_YesN-like"/>
    <property type="match status" value="1"/>
</dbReference>
<dbReference type="Gene3D" id="3.40.50.2300">
    <property type="match status" value="1"/>
</dbReference>
<dbReference type="Gene3D" id="1.10.10.60">
    <property type="entry name" value="Homeodomain-like"/>
    <property type="match status" value="2"/>
</dbReference>
<dbReference type="InterPro" id="IPR011006">
    <property type="entry name" value="CheY-like_superfamily"/>
</dbReference>
<dbReference type="InterPro" id="IPR009057">
    <property type="entry name" value="Homeodomain-like_sf"/>
</dbReference>
<dbReference type="InterPro" id="IPR051552">
    <property type="entry name" value="HptR"/>
</dbReference>
<dbReference type="InterPro" id="IPR018060">
    <property type="entry name" value="HTH_AraC"/>
</dbReference>
<dbReference type="InterPro" id="IPR001789">
    <property type="entry name" value="Sig_transdc_resp-reg_receiver"/>
</dbReference>
<dbReference type="PANTHER" id="PTHR42713">
    <property type="entry name" value="HISTIDINE KINASE-RELATED"/>
    <property type="match status" value="1"/>
</dbReference>
<dbReference type="PANTHER" id="PTHR42713:SF3">
    <property type="entry name" value="TRANSCRIPTIONAL REGULATORY PROTEIN HPTR"/>
    <property type="match status" value="1"/>
</dbReference>
<dbReference type="Pfam" id="PF12833">
    <property type="entry name" value="HTH_18"/>
    <property type="match status" value="1"/>
</dbReference>
<dbReference type="Pfam" id="PF00072">
    <property type="entry name" value="Response_reg"/>
    <property type="match status" value="1"/>
</dbReference>
<dbReference type="SMART" id="SM00342">
    <property type="entry name" value="HTH_ARAC"/>
    <property type="match status" value="1"/>
</dbReference>
<dbReference type="SMART" id="SM00448">
    <property type="entry name" value="REC"/>
    <property type="match status" value="1"/>
</dbReference>
<dbReference type="SUPFAM" id="SSF52172">
    <property type="entry name" value="CheY-like"/>
    <property type="match status" value="1"/>
</dbReference>
<dbReference type="SUPFAM" id="SSF46689">
    <property type="entry name" value="Homeodomain-like"/>
    <property type="match status" value="2"/>
</dbReference>
<dbReference type="PROSITE" id="PS01124">
    <property type="entry name" value="HTH_ARAC_FAMILY_2"/>
    <property type="match status" value="1"/>
</dbReference>
<dbReference type="PROSITE" id="PS50110">
    <property type="entry name" value="RESPONSE_REGULATORY"/>
    <property type="match status" value="1"/>
</dbReference>
<feature type="chain" id="PRO_0000299113" description="Transcriptional regulatory protein HptR">
    <location>
        <begin position="1"/>
        <end position="252"/>
    </location>
</feature>
<feature type="domain" description="Response regulatory" evidence="2">
    <location>
        <begin position="3"/>
        <end position="118"/>
    </location>
</feature>
<feature type="domain" description="HTH araC/xylS-type" evidence="3">
    <location>
        <begin position="153"/>
        <end position="250"/>
    </location>
</feature>
<feature type="DNA-binding region" description="H-T-H motif" evidence="3">
    <location>
        <begin position="170"/>
        <end position="191"/>
    </location>
</feature>
<feature type="DNA-binding region" description="H-T-H motif" evidence="3">
    <location>
        <begin position="217"/>
        <end position="240"/>
    </location>
</feature>
<feature type="modified residue" description="4-aspartylphosphate" evidence="2">
    <location>
        <position position="55"/>
    </location>
</feature>
<reference key="1">
    <citation type="journal article" date="2002" name="Lancet">
        <title>Genome and virulence determinants of high virulence community-acquired MRSA.</title>
        <authorList>
            <person name="Baba T."/>
            <person name="Takeuchi F."/>
            <person name="Kuroda M."/>
            <person name="Yuzawa H."/>
            <person name="Aoki K."/>
            <person name="Oguchi A."/>
            <person name="Nagai Y."/>
            <person name="Iwama N."/>
            <person name="Asano K."/>
            <person name="Naimi T."/>
            <person name="Kuroda H."/>
            <person name="Cui L."/>
            <person name="Yamamoto K."/>
            <person name="Hiramatsu K."/>
        </authorList>
    </citation>
    <scope>NUCLEOTIDE SEQUENCE [LARGE SCALE GENOMIC DNA]</scope>
    <source>
        <strain>MW2</strain>
    </source>
</reference>
<sequence length="252" mass="29599">MFKVVICDDERIIREGLKQIIPWGDYHFNTIYTAKDGVEALSLIQQHQPELVITDIRMPRKNGVDLLNDIAHLDCNVIILSSYDDFEYMKAGIQHHVLDYLLKPVDHAQLEVILGRLVRTLLEQQSQNGRSLASCHDAFQPLLKVEYDDYYVNQIVDQIKQSYQTKVTVSDLIQHIDVSESYAMRTFKDHVGITIVDYLNRYRILQSLQLLDRHYKHYEIADKVGFSEYKMFSYHFKKYLQMSPSDYCKQAK</sequence>
<name>HPTR_STAAW</name>
<proteinExistence type="inferred from homology"/>
<comment type="function">
    <text evidence="1">Member of the two-component regulatory system HptS/HptR that regulates genes involved in hexose phosphate transport system in response to changes in extracellular phosphate sources. Activates uhpT expression to facilitate glucose-6-phosphate/G6P utilization by directly binding to its promoter. Antagonizes CcpA-dependent transcription of a subset of CcpA-regulated genes involved in antibiotic susceptibility.</text>
</comment>
<comment type="subcellular location">
    <subcellularLocation>
        <location evidence="4">Cytoplasm</location>
    </subcellularLocation>
</comment>
<comment type="PTM">
    <text evidence="1">Phosphorylated by HptS.</text>
</comment>